<reference key="1">
    <citation type="submission" date="2006-10" db="EMBL/GenBank/DDBJ databases">
        <title>NISC comparative sequencing initiative.</title>
        <authorList>
            <person name="Antonellis A."/>
            <person name="Ayele K."/>
            <person name="Benjamin B."/>
            <person name="Blakesley R.W."/>
            <person name="Boakye A."/>
            <person name="Bouffard G.G."/>
            <person name="Brinkley C."/>
            <person name="Brooks S."/>
            <person name="Chu G."/>
            <person name="Coleman H."/>
            <person name="Engle J."/>
            <person name="Gestole M."/>
            <person name="Greene A."/>
            <person name="Guan X."/>
            <person name="Gupta J."/>
            <person name="Haghighi P."/>
            <person name="Han J."/>
            <person name="Hansen N."/>
            <person name="Ho S.-L."/>
            <person name="Hu P."/>
            <person name="Hunter G."/>
            <person name="Hurle B."/>
            <person name="Idol J.R."/>
            <person name="Kwong P."/>
            <person name="Laric P."/>
            <person name="Larson S."/>
            <person name="Lee-Lin S.-Q."/>
            <person name="Legaspi R."/>
            <person name="Madden M."/>
            <person name="Maduro Q.L."/>
            <person name="Maduro V.B."/>
            <person name="Margulies E.H."/>
            <person name="Masiello C."/>
            <person name="Maskeri B."/>
            <person name="McDowell J."/>
            <person name="Mojidi H.A."/>
            <person name="Mullikin J.C."/>
            <person name="Oestreicher J.S."/>
            <person name="Park M."/>
            <person name="Portnoy M.E."/>
            <person name="Prasad A."/>
            <person name="Puri O."/>
            <person name="Reddix-Dugue N."/>
            <person name="Schandler K."/>
            <person name="Schueler M.G."/>
            <person name="Sison C."/>
            <person name="Stantripop S."/>
            <person name="Stephen E."/>
            <person name="Taye A."/>
            <person name="Thomas J.W."/>
            <person name="Thomas P.J."/>
            <person name="Tsipouri V."/>
            <person name="Ung L."/>
            <person name="Vogt J.L."/>
            <person name="Wetherby K.D."/>
            <person name="Young A."/>
            <person name="Green E.D."/>
        </authorList>
    </citation>
    <scope>NUCLEOTIDE SEQUENCE [LARGE SCALE GENOMIC DNA]</scope>
</reference>
<gene>
    <name evidence="1" type="primary">CFTR</name>
    <name type="synonym">ABCC7</name>
</gene>
<sequence>MQRSPLEKASVISKLFFSWTRPILRKGYRQRLELSDIYQIPSTDSADNLSEKLEREWDRELASKKNPKLINALRRCFFWKFMFYGILLYLGEVTKAVQPLLLGRIIASYDPDNKVERSIAIYLGIGLCLLFVVRTLLLHPAIFGLHHIGMQMRIAMFSLIYKKTLKLSSRVLDKISIGQLISLLSNNLNKFDEGLALAHFVWIVPLQVTLLMGLLWELLQASAFCGLAFLIIVAFYQAGLGRMMMKYRDKRGGKINERLVITSEMIENIQSVKAYCWEEAMEKMIENLRQTELKLTRKAAYVRYCNSSAFFFSGFFVVFLSVLPYALMKGIILRKIFTTISFCIVLRMAVTRQFPWAVQTWYDSLGAINKIQDFLQKQEYKTLEYNLTTTEVVMENATAYWEEGFGGLFEKAKQNNNNRKISNGDNSLFFSNFSLLGTPVLKDINFKIERGQLLAVAGSTGAGKTSLLMMIMGELEPSAGKIKHSGRISFCSQFSWIMPGTIKENIIFGVSYDEYRYRSVIKACQLEEDISKFTEKDNIVLGEGGITLSGGQRARISLARAVYKDADLYLLDSPFGYLDVLTEKEIFESCVCKLMANKTRILVTSKMEHLKKADKILILHEGSTYFYGTFSELQNLRPDFSSKLMGYDSFDQFSAERRNSILTETLRRFSLEGDGAVSWNETRKQSFKQTGEFGEKRKNSILNSMNSARKFSIVQKTTLQMNGIEANSEEPLERRLSLVPDSELGETILPRSNVINTGPTLQGRRRQSVLNLMTGSSGNQGQGIHRKAAASTRKMSLAPSTNFTEMDIYSRRLSQDSGLEISEEINEEDLKECFFDDVENIPAVTTWNTYLRYITIHKSLIFVLIWCLIIFLAEVAVSLVFLLLFEKSPRQDTGNVTKSSNNSSYGVIITNTSSYYIIYIYVGVADTLLALGLLRGLPLVHTLITASKILHHKMLHSVLQAPMSTLNTLKAGGILNRFSKDIAILDDLLPLTIFDFIQLILIVIGAVIVVSVLEPYIFLATVPVIIAFVMLRAYFLHTSQQLKQLESEGRSPIFTHLVTSLKGLWTLRAFGRQPYFETLFHKALNLHTANWFLYLSTLRWFQMRIEMIFVIFFIAVTFISILTTGDGEGRVGIILTLAMNIMNTLQWAVNSSIDVDSLMRSVSRVFKFIDMPTEEIKPSKPVKPSKEGPLSKVMIIENEHVKKDDIWPSGGQMTVKDLTAKYIESGNAILENISFSISPGQRVGLLGRTGSGKSTLLSAFLRLLNTEGEIQIDGVSWDSITLQQWRKAFGVIPQKVFIFSGTFRKNLDPYEQWNDQEIWKVADEVGLRSVIEQFPGKLDFVLVDGGYVLSHGHKQLMCLARSVLSKAKILLLDEPSAHLDPITYQIIRRTIKQAFADCTVILCEHRIEAMLECQRFLVIEENKVRQYDSIQKLLSEKSLFRQAISNSDRLKLFPHRNSSKHKSRSKIAALKEETEEEVQETRL</sequence>
<keyword id="KW-0067">ATP-binding</keyword>
<keyword id="KW-1003">Cell membrane</keyword>
<keyword id="KW-0868">Chloride</keyword>
<keyword id="KW-0869">Chloride channel</keyword>
<keyword id="KW-0256">Endoplasmic reticulum</keyword>
<keyword id="KW-0967">Endosome</keyword>
<keyword id="KW-0325">Glycoprotein</keyword>
<keyword id="KW-0407">Ion channel</keyword>
<keyword id="KW-0406">Ion transport</keyword>
<keyword id="KW-0413">Isomerase</keyword>
<keyword id="KW-1017">Isopeptide bond</keyword>
<keyword id="KW-0449">Lipoprotein</keyword>
<keyword id="KW-0472">Membrane</keyword>
<keyword id="KW-0547">Nucleotide-binding</keyword>
<keyword id="KW-0539">Nucleus</keyword>
<keyword id="KW-0564">Palmitate</keyword>
<keyword id="KW-0597">Phosphoprotein</keyword>
<keyword id="KW-0677">Repeat</keyword>
<keyword id="KW-0812">Transmembrane</keyword>
<keyword id="KW-1133">Transmembrane helix</keyword>
<keyword id="KW-0813">Transport</keyword>
<keyword id="KW-0832">Ubl conjugation</keyword>
<feature type="chain" id="PRO_0000274184" description="Cystic fibrosis transmembrane conductance regulator">
    <location>
        <begin position="1"/>
        <end position="1483"/>
    </location>
</feature>
<feature type="topological domain" description="Cytoplasmic" evidence="1">
    <location>
        <begin position="1"/>
        <end position="77"/>
    </location>
</feature>
<feature type="transmembrane region" description="Helical; Name=1" evidence="1">
    <location>
        <begin position="78"/>
        <end position="98"/>
    </location>
</feature>
<feature type="topological domain" description="Extracellular" evidence="1">
    <location>
        <begin position="99"/>
        <end position="122"/>
    </location>
</feature>
<feature type="transmembrane region" description="Helical; Name=2" evidence="1">
    <location>
        <begin position="123"/>
        <end position="146"/>
    </location>
</feature>
<feature type="topological domain" description="Cytoplasmic" evidence="1">
    <location>
        <begin position="147"/>
        <end position="195"/>
    </location>
</feature>
<feature type="transmembrane region" description="Helical; Name=3" evidence="1">
    <location>
        <begin position="196"/>
        <end position="216"/>
    </location>
</feature>
<feature type="topological domain" description="Extracellular" evidence="1">
    <location>
        <begin position="217"/>
        <end position="222"/>
    </location>
</feature>
<feature type="transmembrane region" description="Helical; Name=4" evidence="1">
    <location>
        <begin position="223"/>
        <end position="243"/>
    </location>
</feature>
<feature type="topological domain" description="Cytoplasmic" evidence="1">
    <location>
        <begin position="244"/>
        <end position="298"/>
    </location>
</feature>
<feature type="transmembrane region" description="Helical; Name=5" evidence="1">
    <location>
        <begin position="299"/>
        <end position="319"/>
    </location>
</feature>
<feature type="topological domain" description="Extracellular" evidence="1">
    <location>
        <begin position="320"/>
        <end position="339"/>
    </location>
</feature>
<feature type="transmembrane region" description="Helical; Name=6" evidence="1">
    <location>
        <begin position="340"/>
        <end position="358"/>
    </location>
</feature>
<feature type="topological domain" description="Cytoplasmic" evidence="1">
    <location>
        <begin position="359"/>
        <end position="859"/>
    </location>
</feature>
<feature type="transmembrane region" description="Helical; Name=7" evidence="1">
    <location>
        <begin position="860"/>
        <end position="880"/>
    </location>
</feature>
<feature type="topological domain" description="Extracellular" evidence="1">
    <location>
        <begin position="881"/>
        <end position="920"/>
    </location>
</feature>
<feature type="transmembrane region" description="Discontinuously helical; Name=8" evidence="1">
    <location>
        <begin position="921"/>
        <end position="941"/>
    </location>
</feature>
<feature type="topological domain" description="Cytoplasmic" evidence="1">
    <location>
        <begin position="942"/>
        <end position="992"/>
    </location>
</feature>
<feature type="transmembrane region" description="Helical; Name=9" evidence="1">
    <location>
        <begin position="993"/>
        <end position="1013"/>
    </location>
</feature>
<feature type="topological domain" description="Extracellular" evidence="1">
    <location>
        <begin position="1014"/>
        <end position="1015"/>
    </location>
</feature>
<feature type="transmembrane region" description="Helical; Name=10" evidence="1">
    <location>
        <begin position="1016"/>
        <end position="1036"/>
    </location>
</feature>
<feature type="topological domain" description="Cytoplasmic" evidence="1">
    <location>
        <begin position="1037"/>
        <end position="1097"/>
    </location>
</feature>
<feature type="transmembrane region" description="Helical; Name=11" evidence="1">
    <location>
        <begin position="1098"/>
        <end position="1118"/>
    </location>
</feature>
<feature type="topological domain" description="Extracellular" evidence="1">
    <location>
        <begin position="1119"/>
        <end position="1132"/>
    </location>
</feature>
<feature type="transmembrane region" description="Helical; Name=12" evidence="1">
    <location>
        <begin position="1133"/>
        <end position="1153"/>
    </location>
</feature>
<feature type="topological domain" description="Cytoplasmic" evidence="1">
    <location>
        <begin position="1154"/>
        <end position="1483"/>
    </location>
</feature>
<feature type="domain" description="ABC transmembrane type-1 1" evidence="6">
    <location>
        <begin position="81"/>
        <end position="365"/>
    </location>
</feature>
<feature type="domain" description="ABC transporter 1" evidence="5">
    <location>
        <begin position="423"/>
        <end position="646"/>
    </location>
</feature>
<feature type="domain" description="ABC transmembrane type-1 2" evidence="6">
    <location>
        <begin position="860"/>
        <end position="1157"/>
    </location>
</feature>
<feature type="domain" description="ABC transporter 2" evidence="5">
    <location>
        <begin position="1213"/>
        <end position="1446"/>
    </location>
</feature>
<feature type="region of interest" description="Disordered R region" evidence="1">
    <location>
        <begin position="654"/>
        <end position="832"/>
    </location>
</feature>
<feature type="region of interest" description="Interaction with GORASP2" evidence="1">
    <location>
        <begin position="1389"/>
        <end position="1483"/>
    </location>
</feature>
<feature type="region of interest" description="Disordered" evidence="7">
    <location>
        <begin position="1455"/>
        <end position="1483"/>
    </location>
</feature>
<feature type="short sequence motif" description="PDZ-binding" evidence="1">
    <location>
        <begin position="1481"/>
        <end position="1483"/>
    </location>
</feature>
<feature type="compositionally biased region" description="Basic residues" evidence="7">
    <location>
        <begin position="1455"/>
        <end position="1465"/>
    </location>
</feature>
<feature type="compositionally biased region" description="Acidic residues" evidence="7">
    <location>
        <begin position="1473"/>
        <end position="1483"/>
    </location>
</feature>
<feature type="binding site" evidence="1">
    <location>
        <position position="401"/>
    </location>
    <ligand>
        <name>ATP</name>
        <dbReference type="ChEBI" id="CHEBI:30616"/>
        <label>1</label>
    </ligand>
</feature>
<feature type="binding site" evidence="1">
    <location>
        <position position="434"/>
    </location>
    <ligand>
        <name>ATP</name>
        <dbReference type="ChEBI" id="CHEBI:30616"/>
        <label>1</label>
    </ligand>
</feature>
<feature type="binding site" evidence="5">
    <location>
        <begin position="458"/>
        <end position="465"/>
    </location>
    <ligand>
        <name>ATP</name>
        <dbReference type="ChEBI" id="CHEBI:30616"/>
        <label>1</label>
    </ligand>
</feature>
<feature type="binding site" evidence="2">
    <location>
        <position position="493"/>
    </location>
    <ligand>
        <name>ATP</name>
        <dbReference type="ChEBI" id="CHEBI:30616"/>
        <label>1</label>
    </ligand>
</feature>
<feature type="binding site" evidence="1">
    <location>
        <position position="1222"/>
    </location>
    <ligand>
        <name>ATP</name>
        <dbReference type="ChEBI" id="CHEBI:30616"/>
        <label>2</label>
    </ligand>
</feature>
<feature type="binding site" evidence="5">
    <location>
        <begin position="1247"/>
        <end position="1254"/>
    </location>
    <ligand>
        <name>ATP</name>
        <dbReference type="ChEBI" id="CHEBI:30616"/>
        <label>2</label>
    </ligand>
</feature>
<feature type="modified residue" description="Phosphoserine" evidence="1">
    <location>
        <position position="549"/>
    </location>
</feature>
<feature type="modified residue" description="Phosphoserine" evidence="1">
    <location>
        <position position="660"/>
    </location>
</feature>
<feature type="modified residue" description="Phosphoserine; by PKA" evidence="1">
    <location>
        <position position="670"/>
    </location>
</feature>
<feature type="modified residue" description="Phosphoserine" evidence="1">
    <location>
        <position position="686"/>
    </location>
</feature>
<feature type="modified residue" description="Phosphoserine" evidence="1">
    <location>
        <position position="700"/>
    </location>
</feature>
<feature type="modified residue" description="Phosphoserine" evidence="1">
    <location>
        <position position="712"/>
    </location>
</feature>
<feature type="modified residue" description="Phosphothreonine" evidence="1">
    <location>
        <position position="717"/>
    </location>
</feature>
<feature type="modified residue" description="Phosphoserine" evidence="1">
    <location>
        <position position="737"/>
    </location>
</feature>
<feature type="modified residue" description="Phosphoserine" evidence="1">
    <location>
        <position position="768"/>
    </location>
</feature>
<feature type="modified residue" description="Phosphoserine" evidence="1">
    <location>
        <position position="791"/>
    </location>
</feature>
<feature type="modified residue" description="Phosphoserine" evidence="1">
    <location>
        <position position="796"/>
    </location>
</feature>
<feature type="modified residue" description="Phosphoserine" evidence="1">
    <location>
        <position position="814"/>
    </location>
</feature>
<feature type="modified residue" description="Phosphoserine" evidence="1">
    <location>
        <position position="1447"/>
    </location>
</feature>
<feature type="modified residue" description="Phosphoserine" evidence="1">
    <location>
        <position position="1459"/>
    </location>
</feature>
<feature type="lipid moiety-binding region" description="S-palmitoyl cysteine" evidence="1">
    <location>
        <position position="524"/>
    </location>
</feature>
<feature type="lipid moiety-binding region" description="S-palmitoyl cysteine" evidence="1">
    <location>
        <position position="1398"/>
    </location>
</feature>
<feature type="glycosylation site" description="N-linked (GlcNAc...) asparagine" evidence="4">
    <location>
        <position position="895"/>
    </location>
</feature>
<feature type="glycosylation site" description="N-linked (GlcNAc...) asparagine" evidence="4">
    <location>
        <position position="901"/>
    </location>
</feature>
<feature type="glycosylation site" description="N-linked (GlcNAc...) asparagine" evidence="4">
    <location>
        <position position="902"/>
    </location>
</feature>
<feature type="glycosylation site" description="N-linked (GlcNAc...) asparagine" evidence="4">
    <location>
        <position position="911"/>
    </location>
</feature>
<feature type="cross-link" description="Glycyl lysine isopeptide (Lys-Gly) (interchain with G-Cter in ubiquitin)" evidence="1">
    <location>
        <position position="688"/>
    </location>
</feature>
<dbReference type="EC" id="5.6.1.6" evidence="1"/>
<dbReference type="EMBL" id="DP000003">
    <property type="protein sequence ID" value="AAY88985.1"/>
    <property type="molecule type" value="Genomic_DNA"/>
</dbReference>
<dbReference type="BMRB" id="Q00PJ2"/>
<dbReference type="SMR" id="Q00PJ2"/>
<dbReference type="GlyCosmos" id="Q00PJ2">
    <property type="glycosylation" value="4 sites, No reported glycans"/>
</dbReference>
<dbReference type="GO" id="GO:0016324">
    <property type="term" value="C:apical plasma membrane"/>
    <property type="evidence" value="ECO:0000250"/>
    <property type="project" value="UniProtKB"/>
</dbReference>
<dbReference type="GO" id="GO:0034707">
    <property type="term" value="C:chloride channel complex"/>
    <property type="evidence" value="ECO:0007669"/>
    <property type="project" value="UniProtKB-KW"/>
</dbReference>
<dbReference type="GO" id="GO:0005829">
    <property type="term" value="C:cytosol"/>
    <property type="evidence" value="ECO:0007669"/>
    <property type="project" value="TreeGrafter"/>
</dbReference>
<dbReference type="GO" id="GO:0005769">
    <property type="term" value="C:early endosome"/>
    <property type="evidence" value="ECO:0000250"/>
    <property type="project" value="UniProtKB"/>
</dbReference>
<dbReference type="GO" id="GO:0031901">
    <property type="term" value="C:early endosome membrane"/>
    <property type="evidence" value="ECO:0007669"/>
    <property type="project" value="UniProtKB-SubCell"/>
</dbReference>
<dbReference type="GO" id="GO:0005789">
    <property type="term" value="C:endoplasmic reticulum membrane"/>
    <property type="evidence" value="ECO:0000250"/>
    <property type="project" value="UniProtKB"/>
</dbReference>
<dbReference type="GO" id="GO:0016020">
    <property type="term" value="C:membrane"/>
    <property type="evidence" value="ECO:0000250"/>
    <property type="project" value="UniProtKB"/>
</dbReference>
<dbReference type="GO" id="GO:0005634">
    <property type="term" value="C:nucleus"/>
    <property type="evidence" value="ECO:0000250"/>
    <property type="project" value="UniProtKB"/>
</dbReference>
<dbReference type="GO" id="GO:0005886">
    <property type="term" value="C:plasma membrane"/>
    <property type="evidence" value="ECO:0000250"/>
    <property type="project" value="UniProtKB"/>
</dbReference>
<dbReference type="GO" id="GO:0055038">
    <property type="term" value="C:recycling endosome membrane"/>
    <property type="evidence" value="ECO:0007669"/>
    <property type="project" value="UniProtKB-SubCell"/>
</dbReference>
<dbReference type="GO" id="GO:0140359">
    <property type="term" value="F:ABC-type transporter activity"/>
    <property type="evidence" value="ECO:0007669"/>
    <property type="project" value="InterPro"/>
</dbReference>
<dbReference type="GO" id="GO:0005524">
    <property type="term" value="F:ATP binding"/>
    <property type="evidence" value="ECO:0007669"/>
    <property type="project" value="UniProtKB-KW"/>
</dbReference>
<dbReference type="GO" id="GO:0016887">
    <property type="term" value="F:ATP hydrolysis activity"/>
    <property type="evidence" value="ECO:0000250"/>
    <property type="project" value="UniProtKB"/>
</dbReference>
<dbReference type="GO" id="GO:0015106">
    <property type="term" value="F:bicarbonate transmembrane transporter activity"/>
    <property type="evidence" value="ECO:0000250"/>
    <property type="project" value="UniProtKB"/>
</dbReference>
<dbReference type="GO" id="GO:0005254">
    <property type="term" value="F:chloride channel activity"/>
    <property type="evidence" value="ECO:0000250"/>
    <property type="project" value="UniProtKB"/>
</dbReference>
<dbReference type="GO" id="GO:0019869">
    <property type="term" value="F:chloride channel inhibitor activity"/>
    <property type="evidence" value="ECO:0000250"/>
    <property type="project" value="UniProtKB"/>
</dbReference>
<dbReference type="GO" id="GO:0015108">
    <property type="term" value="F:chloride transmembrane transporter activity"/>
    <property type="evidence" value="ECO:0000250"/>
    <property type="project" value="UniProtKB"/>
</dbReference>
<dbReference type="GO" id="GO:0005260">
    <property type="term" value="F:intracellularly ATP-gated chloride channel activity"/>
    <property type="evidence" value="ECO:0000250"/>
    <property type="project" value="UniProtKB"/>
</dbReference>
<dbReference type="GO" id="GO:0015701">
    <property type="term" value="P:bicarbonate transport"/>
    <property type="evidence" value="ECO:0000250"/>
    <property type="project" value="UniProtKB"/>
</dbReference>
<dbReference type="GO" id="GO:0071320">
    <property type="term" value="P:cellular response to cAMP"/>
    <property type="evidence" value="ECO:0000250"/>
    <property type="project" value="UniProtKB"/>
</dbReference>
<dbReference type="GO" id="GO:1904322">
    <property type="term" value="P:cellular response to forskolin"/>
    <property type="evidence" value="ECO:0000250"/>
    <property type="project" value="UniProtKB"/>
</dbReference>
<dbReference type="GO" id="GO:1902476">
    <property type="term" value="P:chloride transmembrane transport"/>
    <property type="evidence" value="ECO:0000250"/>
    <property type="project" value="UniProtKB"/>
</dbReference>
<dbReference type="GO" id="GO:0051454">
    <property type="term" value="P:intracellular pH elevation"/>
    <property type="evidence" value="ECO:0000250"/>
    <property type="project" value="UniProtKB"/>
</dbReference>
<dbReference type="GO" id="GO:0060081">
    <property type="term" value="P:membrane hyperpolarization"/>
    <property type="evidence" value="ECO:0000250"/>
    <property type="project" value="UniProtKB"/>
</dbReference>
<dbReference type="GO" id="GO:0050891">
    <property type="term" value="P:multicellular organismal-level water homeostasis"/>
    <property type="evidence" value="ECO:0000250"/>
    <property type="project" value="UniProtKB"/>
</dbReference>
<dbReference type="GO" id="GO:0034976">
    <property type="term" value="P:response to endoplasmic reticulum stress"/>
    <property type="evidence" value="ECO:0000250"/>
    <property type="project" value="UniProtKB"/>
</dbReference>
<dbReference type="GO" id="GO:0048240">
    <property type="term" value="P:sperm capacitation"/>
    <property type="evidence" value="ECO:0000250"/>
    <property type="project" value="UniProtKB"/>
</dbReference>
<dbReference type="GO" id="GO:0035377">
    <property type="term" value="P:transepithelial water transport"/>
    <property type="evidence" value="ECO:0000250"/>
    <property type="project" value="UniProtKB"/>
</dbReference>
<dbReference type="CDD" id="cd18594">
    <property type="entry name" value="ABC_6TM_CFTR_D1"/>
    <property type="match status" value="1"/>
</dbReference>
<dbReference type="CDD" id="cd18600">
    <property type="entry name" value="ABC_6TM_CFTR_D2"/>
    <property type="match status" value="1"/>
</dbReference>
<dbReference type="CDD" id="cd03291">
    <property type="entry name" value="ABCC_CFTR1"/>
    <property type="match status" value="1"/>
</dbReference>
<dbReference type="CDD" id="cd03289">
    <property type="entry name" value="ABCC_CFTR2"/>
    <property type="match status" value="1"/>
</dbReference>
<dbReference type="FunFam" id="1.20.1560.10:FF:000017">
    <property type="entry name" value="Cystic fibrosis transmembrane conductance regulator"/>
    <property type="match status" value="1"/>
</dbReference>
<dbReference type="FunFam" id="1.20.1560.10:FF:000019">
    <property type="entry name" value="Cystic fibrosis transmembrane conductance regulator"/>
    <property type="match status" value="1"/>
</dbReference>
<dbReference type="FunFam" id="3.40.50.300:FF:000581">
    <property type="entry name" value="Cystic fibrosis transmembrane conductance regulator"/>
    <property type="match status" value="1"/>
</dbReference>
<dbReference type="FunFam" id="3.40.50.300:FF:000591">
    <property type="entry name" value="Cystic fibrosis transmembrane conductance regulator"/>
    <property type="match status" value="1"/>
</dbReference>
<dbReference type="Gene3D" id="1.20.1560.10">
    <property type="entry name" value="ABC transporter type 1, transmembrane domain"/>
    <property type="match status" value="2"/>
</dbReference>
<dbReference type="Gene3D" id="3.40.50.300">
    <property type="entry name" value="P-loop containing nucleotide triphosphate hydrolases"/>
    <property type="match status" value="2"/>
</dbReference>
<dbReference type="InterPro" id="IPR003593">
    <property type="entry name" value="AAA+_ATPase"/>
</dbReference>
<dbReference type="InterPro" id="IPR011527">
    <property type="entry name" value="ABC1_TM_dom"/>
</dbReference>
<dbReference type="InterPro" id="IPR036640">
    <property type="entry name" value="ABC1_TM_sf"/>
</dbReference>
<dbReference type="InterPro" id="IPR003439">
    <property type="entry name" value="ABC_transporter-like_ATP-bd"/>
</dbReference>
<dbReference type="InterPro" id="IPR017871">
    <property type="entry name" value="ABC_transporter-like_CS"/>
</dbReference>
<dbReference type="InterPro" id="IPR050173">
    <property type="entry name" value="ABC_transporter_C-like"/>
</dbReference>
<dbReference type="InterPro" id="IPR009147">
    <property type="entry name" value="CFTR/ABCC7"/>
</dbReference>
<dbReference type="InterPro" id="IPR047082">
    <property type="entry name" value="CFTR1_ATP-bd_dom1"/>
</dbReference>
<dbReference type="InterPro" id="IPR025837">
    <property type="entry name" value="CFTR_reg_dom"/>
</dbReference>
<dbReference type="InterPro" id="IPR027417">
    <property type="entry name" value="P-loop_NTPase"/>
</dbReference>
<dbReference type="NCBIfam" id="TIGR01271">
    <property type="entry name" value="CFTR_protein"/>
    <property type="match status" value="1"/>
</dbReference>
<dbReference type="PANTHER" id="PTHR24223">
    <property type="entry name" value="ATP-BINDING CASSETTE SUB-FAMILY C"/>
    <property type="match status" value="1"/>
</dbReference>
<dbReference type="PANTHER" id="PTHR24223:SF19">
    <property type="entry name" value="CYSTIC FIBROSIS TRANSMEMBRANE CONDUCTANCE REGULATOR"/>
    <property type="match status" value="1"/>
</dbReference>
<dbReference type="Pfam" id="PF00664">
    <property type="entry name" value="ABC_membrane"/>
    <property type="match status" value="2"/>
</dbReference>
<dbReference type="Pfam" id="PF00005">
    <property type="entry name" value="ABC_tran"/>
    <property type="match status" value="2"/>
</dbReference>
<dbReference type="Pfam" id="PF14396">
    <property type="entry name" value="CFTR_R"/>
    <property type="match status" value="1"/>
</dbReference>
<dbReference type="PRINTS" id="PR01851">
    <property type="entry name" value="CYSFIBREGLTR"/>
</dbReference>
<dbReference type="SMART" id="SM00382">
    <property type="entry name" value="AAA"/>
    <property type="match status" value="2"/>
</dbReference>
<dbReference type="SUPFAM" id="SSF90123">
    <property type="entry name" value="ABC transporter transmembrane region"/>
    <property type="match status" value="2"/>
</dbReference>
<dbReference type="SUPFAM" id="SSF52540">
    <property type="entry name" value="P-loop containing nucleoside triphosphate hydrolases"/>
    <property type="match status" value="2"/>
</dbReference>
<dbReference type="PROSITE" id="PS50929">
    <property type="entry name" value="ABC_TM1F"/>
    <property type="match status" value="2"/>
</dbReference>
<dbReference type="PROSITE" id="PS00211">
    <property type="entry name" value="ABC_TRANSPORTER_1"/>
    <property type="match status" value="1"/>
</dbReference>
<dbReference type="PROSITE" id="PS50893">
    <property type="entry name" value="ABC_TRANSPORTER_2"/>
    <property type="match status" value="2"/>
</dbReference>
<protein>
    <recommendedName>
        <fullName evidence="1">Cystic fibrosis transmembrane conductance regulator</fullName>
        <shortName>CFTR</shortName>
    </recommendedName>
    <alternativeName>
        <fullName>ATP-binding cassette sub-family C member 7</fullName>
    </alternativeName>
    <alternativeName>
        <fullName>Channel conductance-controlling ATPase</fullName>
        <ecNumber evidence="1">5.6.1.6</ecNumber>
    </alternativeName>
    <alternativeName>
        <fullName>cAMP-dependent chloride channel</fullName>
    </alternativeName>
</protein>
<name>CFTR_ATEAB</name>
<comment type="function">
    <text evidence="1 2">Epithelial ion channel that plays an important role in the regulation of epithelial ion and water transport and fluid homeostasis. Mediates the transport of chloride ions across the cell membrane (By similarity). The ion channel is also permeable to HCO(3)(-); selectivity depends on the extracellular chloride concentration. Exerts its function also by modulating the activity of other ion channels and transporters. Contributes to the regulation of the pH and the ion content of the epithelial fluid layer. Modulates the activity of the epithelial sodium channel (ENaC) complex, in part by regulating the cell surface expression of the ENaC complex. May regulate bicarbonate secretion and salvage in epithelial cells by regulating the transporter SLC4A7. Can inhibit the chloride channel activity of ANO1 (By similarity). Plays a role in the chloride and bicarbonate homeostasis during sperm epididymal maturation and capacitation (By similarity).</text>
</comment>
<comment type="catalytic activity">
    <reaction evidence="1">
        <text>ATP + H2O + closed Cl(-) channel = ADP + phosphate + open Cl(-) channel.</text>
        <dbReference type="EC" id="5.6.1.6"/>
    </reaction>
</comment>
<comment type="catalytic activity">
    <reaction evidence="1">
        <text>chloride(in) = chloride(out)</text>
        <dbReference type="Rhea" id="RHEA:29823"/>
        <dbReference type="ChEBI" id="CHEBI:17996"/>
    </reaction>
</comment>
<comment type="catalytic activity">
    <reaction evidence="1">
        <text>hydrogencarbonate(in) = hydrogencarbonate(out)</text>
        <dbReference type="Rhea" id="RHEA:28695"/>
        <dbReference type="ChEBI" id="CHEBI:17544"/>
    </reaction>
</comment>
<comment type="catalytic activity">
    <reaction evidence="1">
        <text>ATP + H2O = ADP + phosphate + H(+)</text>
        <dbReference type="Rhea" id="RHEA:13065"/>
        <dbReference type="ChEBI" id="CHEBI:15377"/>
        <dbReference type="ChEBI" id="CHEBI:15378"/>
        <dbReference type="ChEBI" id="CHEBI:30616"/>
        <dbReference type="ChEBI" id="CHEBI:43474"/>
        <dbReference type="ChEBI" id="CHEBI:456216"/>
    </reaction>
    <physiologicalReaction direction="left-to-right" evidence="1">
        <dbReference type="Rhea" id="RHEA:13066"/>
    </physiologicalReaction>
</comment>
<comment type="subunit">
    <text evidence="1 2 3">Monomer; does not require oligomerization for channel activity. May form oligomers in the membrane (By similarity). Interacts with SLC26A3, SLC26A6 and NHERF1 (By similarity). Interacts with SHANK2 (By similarity). Interacts with MYO6 (By similarity). Interacts (via C-terminus) with GOPC (via PDZ domain); this promotes CFTR internalization and thereby decreases channel activity. Interacts with SLC4A7 through NHERF1. Found in a complex with MYO5B and RAB11A. Interacts with ANO1. Interacts with SLC26A8 (By similarity). Interacts with AHCYL1; the interaction increases CFTR activity (By similarity). Interacts with CSE1L (By similarity). The core-glycosylated form interacts with GORASP2 (via PDZ GRASP-type 1 domain) in respone to ER stress (By similarity). Interacts with MARCHF2; the interaction leads to CFTR ubiqtuitination and degradation (By similarity). Interacts with ADGRG2 (By similarity).</text>
</comment>
<comment type="subcellular location">
    <subcellularLocation>
        <location evidence="2">Apical cell membrane</location>
        <topology evidence="1">Multi-pass membrane protein</topology>
    </subcellularLocation>
    <subcellularLocation>
        <location evidence="1">Early endosome membrane</location>
        <topology evidence="1">Multi-pass membrane protein</topology>
    </subcellularLocation>
    <subcellularLocation>
        <location evidence="2">Cell membrane</location>
        <topology evidence="1">Multi-pass membrane protein</topology>
    </subcellularLocation>
    <subcellularLocation>
        <location evidence="1">Recycling endosome membrane</location>
        <topology evidence="1">Multi-pass membrane protein</topology>
    </subcellularLocation>
    <subcellularLocation>
        <location evidence="1">Endoplasmic reticulum membrane</location>
        <topology evidence="1">Multi-pass membrane protein</topology>
    </subcellularLocation>
    <subcellularLocation>
        <location evidence="3">Nucleus</location>
    </subcellularLocation>
    <text evidence="1 3">The channel is internalized from the cell surface into an endosomal recycling compartment, from where it is recycled to the cell membrane. In the oviduct and bronchus, detected on the apical side of epithelial cells, but not associated with cilia. In Sertoli cells, a processed product is detected in the nucleus. ER stress induces GORASP2-mediated unconventional (ER/Golgi-independent) trafficking of core-glycosylated CFTR to cell membrane.</text>
</comment>
<comment type="domain">
    <text evidence="1 2">Binds and hydrolyzes ATP via the two cytoplasmic ABC transporter nucleotide-binding domains. The two ATP-binding domains interact with each other, forming a head-to-tail dimer. Normal ATPase activity requires interaction between the two domains. The first ABC transporter nucleotide-binding domain has no ATPase activity by itself.</text>
</comment>
<comment type="domain">
    <text evidence="1">The PDZ-binding motif mediates interactions with GOPC and with the SLC4A7, NHERF1/EBP50 complex.</text>
</comment>
<comment type="domain">
    <text evidence="1">The disordered R region mediates channel activation when it is phosphorylated, but not in the absence of phosphorylation.</text>
</comment>
<comment type="PTM">
    <text evidence="1">N-glycosylated.</text>
</comment>
<comment type="PTM">
    <text evidence="1">Phosphorylated; cAMP treatment promotes phosphorylation and activates the channel. Dephosphorylation decreases the ATPase activity (in vitro). Phosphorylation at PKA sites activates the channel. Phosphorylation at PKC sites enhances the response to phosphorylation by PKA. Phosphorylated by AMPK; this inhibits channel activity.</text>
</comment>
<comment type="PTM">
    <text evidence="1">Ubiquitinated, leading to its degradation in the lysosome. Deubiquitination by USP10 in early endosomes enhances its endocytic recycling to the cell membrane. Ubiquitinated by RNF185 during ER stress. Ubiquitinated by MARCHF2 (By similarity).</text>
</comment>
<comment type="similarity">
    <text evidence="8">Belongs to the ABC transporter superfamily. ABCC family. CFTR transporter (TC 3.A.1.202) subfamily.</text>
</comment>
<organism>
    <name type="scientific">Atelerix albiventris</name>
    <name type="common">Middle-African hedgehog</name>
    <name type="synonym">Four-toed hedgehog</name>
    <dbReference type="NCBI Taxonomy" id="9368"/>
    <lineage>
        <taxon>Eukaryota</taxon>
        <taxon>Metazoa</taxon>
        <taxon>Chordata</taxon>
        <taxon>Craniata</taxon>
        <taxon>Vertebrata</taxon>
        <taxon>Euteleostomi</taxon>
        <taxon>Mammalia</taxon>
        <taxon>Eutheria</taxon>
        <taxon>Laurasiatheria</taxon>
        <taxon>Eulipotyphla</taxon>
        <taxon>Erinaceidae</taxon>
        <taxon>Erinaceinae</taxon>
        <taxon>Atelerix</taxon>
    </lineage>
</organism>
<evidence type="ECO:0000250" key="1">
    <source>
        <dbReference type="UniProtKB" id="P13569"/>
    </source>
</evidence>
<evidence type="ECO:0000250" key="2">
    <source>
        <dbReference type="UniProtKB" id="P26361"/>
    </source>
</evidence>
<evidence type="ECO:0000250" key="3">
    <source>
        <dbReference type="UniProtKB" id="P34158"/>
    </source>
</evidence>
<evidence type="ECO:0000255" key="4"/>
<evidence type="ECO:0000255" key="5">
    <source>
        <dbReference type="PROSITE-ProRule" id="PRU00434"/>
    </source>
</evidence>
<evidence type="ECO:0000255" key="6">
    <source>
        <dbReference type="PROSITE-ProRule" id="PRU00441"/>
    </source>
</evidence>
<evidence type="ECO:0000256" key="7">
    <source>
        <dbReference type="SAM" id="MobiDB-lite"/>
    </source>
</evidence>
<evidence type="ECO:0000305" key="8"/>
<proteinExistence type="inferred from homology"/>
<accession>Q00PJ2</accession>